<comment type="function">
    <text evidence="1">Required for maturation of urease via the functional incorporation of the urease nickel metallocenter.</text>
</comment>
<comment type="subunit">
    <text evidence="1">UreD, UreF and UreG form a complex that acts as a GTP-hydrolysis-dependent molecular chaperone, activating the urease apoprotein by helping to assemble the nickel containing metallocenter of UreC. The UreE protein probably delivers the nickel.</text>
</comment>
<comment type="subcellular location">
    <subcellularLocation>
        <location evidence="1">Cytoplasm</location>
    </subcellularLocation>
</comment>
<comment type="similarity">
    <text evidence="1">Belongs to the UreF family.</text>
</comment>
<sequence length="224" mass="25208">MSTAEQRLRLMQLASSNLPIGGYSWSQGLEWAVEAGWVPDVAAFERWQRRQMTEGFFTVDLPLFARLYRACEQGDIAAAQRWTAYLLACRETRELREEERNRGAAFARLLSDWQPDCPPAWRTLCQQSQLAGMAWLGVRWRIALPEMALSLGYSWIESAVMAGVKLVPFGQQAAQQLILRLCDHYAAEMPRALAAPDGDIGSATPLAAIASARHETQYSRLFRS</sequence>
<protein>
    <recommendedName>
        <fullName evidence="1">Urease accessory protein UreF</fullName>
    </recommendedName>
</protein>
<feature type="chain" id="PRO_1000145119" description="Urease accessory protein UreF">
    <location>
        <begin position="1"/>
        <end position="224"/>
    </location>
</feature>
<gene>
    <name evidence="1" type="primary">ureF</name>
    <name type="ordered locus">KPK_0650</name>
</gene>
<name>UREF_KLEP3</name>
<dbReference type="EMBL" id="CP000964">
    <property type="protein sequence ID" value="ACI10204.1"/>
    <property type="molecule type" value="Genomic_DNA"/>
</dbReference>
<dbReference type="SMR" id="B5XU25"/>
<dbReference type="KEGG" id="kpe:KPK_0650"/>
<dbReference type="HOGENOM" id="CLU_049215_2_1_6"/>
<dbReference type="Proteomes" id="UP000001734">
    <property type="component" value="Chromosome"/>
</dbReference>
<dbReference type="GO" id="GO:0005737">
    <property type="term" value="C:cytoplasm"/>
    <property type="evidence" value="ECO:0007669"/>
    <property type="project" value="UniProtKB-SubCell"/>
</dbReference>
<dbReference type="GO" id="GO:0016151">
    <property type="term" value="F:nickel cation binding"/>
    <property type="evidence" value="ECO:0007669"/>
    <property type="project" value="UniProtKB-UniRule"/>
</dbReference>
<dbReference type="Gene3D" id="1.10.4190.10">
    <property type="entry name" value="Urease accessory protein UreF"/>
    <property type="match status" value="1"/>
</dbReference>
<dbReference type="HAMAP" id="MF_01385">
    <property type="entry name" value="UreF"/>
    <property type="match status" value="1"/>
</dbReference>
<dbReference type="InterPro" id="IPR002639">
    <property type="entry name" value="UreF"/>
</dbReference>
<dbReference type="InterPro" id="IPR038277">
    <property type="entry name" value="UreF_sf"/>
</dbReference>
<dbReference type="PANTHER" id="PTHR33620">
    <property type="entry name" value="UREASE ACCESSORY PROTEIN F"/>
    <property type="match status" value="1"/>
</dbReference>
<dbReference type="PANTHER" id="PTHR33620:SF1">
    <property type="entry name" value="UREASE ACCESSORY PROTEIN F"/>
    <property type="match status" value="1"/>
</dbReference>
<dbReference type="Pfam" id="PF01730">
    <property type="entry name" value="UreF"/>
    <property type="match status" value="1"/>
</dbReference>
<dbReference type="PIRSF" id="PIRSF009467">
    <property type="entry name" value="Ureas_acces_UreF"/>
    <property type="match status" value="1"/>
</dbReference>
<evidence type="ECO:0000255" key="1">
    <source>
        <dbReference type="HAMAP-Rule" id="MF_01385"/>
    </source>
</evidence>
<reference key="1">
    <citation type="journal article" date="2008" name="PLoS Genet.">
        <title>Complete genome sequence of the N2-fixing broad host range endophyte Klebsiella pneumoniae 342 and virulence predictions verified in mice.</title>
        <authorList>
            <person name="Fouts D.E."/>
            <person name="Tyler H.L."/>
            <person name="DeBoy R.T."/>
            <person name="Daugherty S."/>
            <person name="Ren Q."/>
            <person name="Badger J.H."/>
            <person name="Durkin A.S."/>
            <person name="Huot H."/>
            <person name="Shrivastava S."/>
            <person name="Kothari S."/>
            <person name="Dodson R.J."/>
            <person name="Mohamoud Y."/>
            <person name="Khouri H."/>
            <person name="Roesch L.F.W."/>
            <person name="Krogfelt K.A."/>
            <person name="Struve C."/>
            <person name="Triplett E.W."/>
            <person name="Methe B.A."/>
        </authorList>
    </citation>
    <scope>NUCLEOTIDE SEQUENCE [LARGE SCALE GENOMIC DNA]</scope>
    <source>
        <strain>342</strain>
    </source>
</reference>
<keyword id="KW-0143">Chaperone</keyword>
<keyword id="KW-0963">Cytoplasm</keyword>
<keyword id="KW-0996">Nickel insertion</keyword>
<proteinExistence type="inferred from homology"/>
<organism>
    <name type="scientific">Klebsiella pneumoniae (strain 342)</name>
    <dbReference type="NCBI Taxonomy" id="507522"/>
    <lineage>
        <taxon>Bacteria</taxon>
        <taxon>Pseudomonadati</taxon>
        <taxon>Pseudomonadota</taxon>
        <taxon>Gammaproteobacteria</taxon>
        <taxon>Enterobacterales</taxon>
        <taxon>Enterobacteriaceae</taxon>
        <taxon>Klebsiella/Raoultella group</taxon>
        <taxon>Klebsiella</taxon>
        <taxon>Klebsiella pneumoniae complex</taxon>
    </lineage>
</organism>
<accession>B5XU25</accession>